<protein>
    <recommendedName>
        <fullName evidence="1">L-ectoine synthase</fullName>
        <ecNumber evidence="1">4.2.1.108</ecNumber>
    </recommendedName>
    <alternativeName>
        <fullName evidence="1">N-acetyldiaminobutyrate dehydratase</fullName>
    </alternativeName>
</protein>
<name>ECTC_DESAL</name>
<organism>
    <name type="scientific">Desulfatibacillum aliphaticivorans</name>
    <dbReference type="NCBI Taxonomy" id="218208"/>
    <lineage>
        <taxon>Bacteria</taxon>
        <taxon>Pseudomonadati</taxon>
        <taxon>Thermodesulfobacteriota</taxon>
        <taxon>Desulfobacteria</taxon>
        <taxon>Desulfobacterales</taxon>
        <taxon>Desulfatibacillaceae</taxon>
        <taxon>Desulfatibacillum</taxon>
    </lineage>
</organism>
<feature type="chain" id="PRO_1000139968" description="L-ectoine synthase">
    <location>
        <begin position="1"/>
        <end position="130"/>
    </location>
</feature>
<comment type="function">
    <text evidence="1">Catalyzes the circularization of gamma-N-acetyl-alpha,gamma-diaminobutyric acid (ADABA) to ectoine (1,4,5,6-tetrahydro-2-methyl-4-pyrimidine carboxylic acid), which is an excellent osmoprotectant.</text>
</comment>
<comment type="catalytic activity">
    <reaction evidence="1">
        <text>(2S)-4-acetamido-2-aminobutanoate = L-ectoine + H2O</text>
        <dbReference type="Rhea" id="RHEA:17281"/>
        <dbReference type="ChEBI" id="CHEBI:15377"/>
        <dbReference type="ChEBI" id="CHEBI:58515"/>
        <dbReference type="ChEBI" id="CHEBI:58929"/>
        <dbReference type="EC" id="4.2.1.108"/>
    </reaction>
</comment>
<comment type="pathway">
    <text evidence="1">Amine and polyamine biosynthesis; ectoine biosynthesis; L-ectoine from L-aspartate 4-semialdehyde: step 3/3.</text>
</comment>
<comment type="similarity">
    <text evidence="1">Belongs to the ectoine synthase family.</text>
</comment>
<proteinExistence type="inferred from homology"/>
<accession>B8F9C9</accession>
<dbReference type="EC" id="4.2.1.108" evidence="1"/>
<dbReference type="EMBL" id="CP001322">
    <property type="protein sequence ID" value="ACL02875.1"/>
    <property type="molecule type" value="Genomic_DNA"/>
</dbReference>
<dbReference type="RefSeq" id="WP_012610312.1">
    <property type="nucleotide sequence ID" value="NC_011768.1"/>
</dbReference>
<dbReference type="SMR" id="B8F9C9"/>
<dbReference type="KEGG" id="dal:Dalk_1172"/>
<dbReference type="eggNOG" id="COG1917">
    <property type="taxonomic scope" value="Bacteria"/>
</dbReference>
<dbReference type="HOGENOM" id="CLU_154525_0_0_7"/>
<dbReference type="UniPathway" id="UPA00067">
    <property type="reaction ID" value="UER00123"/>
</dbReference>
<dbReference type="Proteomes" id="UP000000739">
    <property type="component" value="Chromosome"/>
</dbReference>
<dbReference type="GO" id="GO:0033990">
    <property type="term" value="F:ectoine synthase activity"/>
    <property type="evidence" value="ECO:0007669"/>
    <property type="project" value="UniProtKB-EC"/>
</dbReference>
<dbReference type="GO" id="GO:0019491">
    <property type="term" value="P:ectoine biosynthetic process"/>
    <property type="evidence" value="ECO:0007669"/>
    <property type="project" value="UniProtKB-UniRule"/>
</dbReference>
<dbReference type="CDD" id="cd06978">
    <property type="entry name" value="cupin_EctC"/>
    <property type="match status" value="1"/>
</dbReference>
<dbReference type="Gene3D" id="2.60.120.10">
    <property type="entry name" value="Jelly Rolls"/>
    <property type="match status" value="1"/>
</dbReference>
<dbReference type="HAMAP" id="MF_01255">
    <property type="entry name" value="Ectoine_synth"/>
    <property type="match status" value="1"/>
</dbReference>
<dbReference type="InterPro" id="IPR010462">
    <property type="entry name" value="Ectoine_synth"/>
</dbReference>
<dbReference type="InterPro" id="IPR014710">
    <property type="entry name" value="RmlC-like_jellyroll"/>
</dbReference>
<dbReference type="InterPro" id="IPR011051">
    <property type="entry name" value="RmlC_Cupin_sf"/>
</dbReference>
<dbReference type="NCBIfam" id="NF009806">
    <property type="entry name" value="PRK13290.1"/>
    <property type="match status" value="1"/>
</dbReference>
<dbReference type="PANTHER" id="PTHR39289">
    <property type="match status" value="1"/>
</dbReference>
<dbReference type="PANTHER" id="PTHR39289:SF1">
    <property type="entry name" value="L-ECTOINE SYNTHASE"/>
    <property type="match status" value="1"/>
</dbReference>
<dbReference type="Pfam" id="PF06339">
    <property type="entry name" value="Ectoine_synth"/>
    <property type="match status" value="1"/>
</dbReference>
<dbReference type="SUPFAM" id="SSF51182">
    <property type="entry name" value="RmlC-like cupins"/>
    <property type="match status" value="1"/>
</dbReference>
<evidence type="ECO:0000255" key="1">
    <source>
        <dbReference type="HAMAP-Rule" id="MF_01255"/>
    </source>
</evidence>
<reference key="1">
    <citation type="journal article" date="2012" name="Environ. Microbiol.">
        <title>The genome sequence of Desulfatibacillum alkenivorans AK-01: a blueprint for anaerobic alkane oxidation.</title>
        <authorList>
            <person name="Callaghan A.V."/>
            <person name="Morris B.E."/>
            <person name="Pereira I.A."/>
            <person name="McInerney M.J."/>
            <person name="Austin R.N."/>
            <person name="Groves J.T."/>
            <person name="Kukor J.J."/>
            <person name="Suflita J.M."/>
            <person name="Young L.Y."/>
            <person name="Zylstra G.J."/>
            <person name="Wawrik B."/>
        </authorList>
    </citation>
    <scope>NUCLEOTIDE SEQUENCE [LARGE SCALE GENOMIC DNA]</scope>
    <source>
        <strain>AK-01</strain>
    </source>
</reference>
<sequence>MLVRQLDDILGTDADVKGETGTWASRRLLLKKDGMGFSLHDTIIYPGTETHLWYKNHLEAVYCIHGKGEIELVPSGELIPIRPGTMYALDKHDEHLLRASEELRLVCVFNPPLTGREDHDEDGAYPVLDD</sequence>
<keyword id="KW-0456">Lyase</keyword>
<keyword id="KW-1185">Reference proteome</keyword>
<gene>
    <name evidence="1" type="primary">ectC</name>
    <name type="ordered locus">Dalk_1172</name>
</gene>